<feature type="chain" id="PRO_1000015185" description="S-adenosylmethionine:tRNA ribosyltransferase-isomerase">
    <location>
        <begin position="1"/>
        <end position="355"/>
    </location>
</feature>
<dbReference type="EC" id="2.4.99.17" evidence="1"/>
<dbReference type="EMBL" id="CP000378">
    <property type="protein sequence ID" value="ABF75153.1"/>
    <property type="molecule type" value="Genomic_DNA"/>
</dbReference>
<dbReference type="SMR" id="Q1BZ02"/>
<dbReference type="HOGENOM" id="CLU_039110_1_0_4"/>
<dbReference type="UniPathway" id="UPA00392"/>
<dbReference type="GO" id="GO:0005737">
    <property type="term" value="C:cytoplasm"/>
    <property type="evidence" value="ECO:0007669"/>
    <property type="project" value="UniProtKB-SubCell"/>
</dbReference>
<dbReference type="GO" id="GO:0051075">
    <property type="term" value="F:S-adenosylmethionine:tRNA ribosyltransferase-isomerase activity"/>
    <property type="evidence" value="ECO:0007669"/>
    <property type="project" value="UniProtKB-EC"/>
</dbReference>
<dbReference type="GO" id="GO:0008616">
    <property type="term" value="P:queuosine biosynthetic process"/>
    <property type="evidence" value="ECO:0007669"/>
    <property type="project" value="UniProtKB-UniRule"/>
</dbReference>
<dbReference type="GO" id="GO:0002099">
    <property type="term" value="P:tRNA wobble guanine modification"/>
    <property type="evidence" value="ECO:0007669"/>
    <property type="project" value="TreeGrafter"/>
</dbReference>
<dbReference type="FunFam" id="3.40.1780.10:FF:000001">
    <property type="entry name" value="S-adenosylmethionine:tRNA ribosyltransferase-isomerase"/>
    <property type="match status" value="1"/>
</dbReference>
<dbReference type="Gene3D" id="2.40.10.240">
    <property type="entry name" value="QueA-like"/>
    <property type="match status" value="1"/>
</dbReference>
<dbReference type="Gene3D" id="3.40.1780.10">
    <property type="entry name" value="QueA-like"/>
    <property type="match status" value="1"/>
</dbReference>
<dbReference type="HAMAP" id="MF_00113">
    <property type="entry name" value="QueA"/>
    <property type="match status" value="1"/>
</dbReference>
<dbReference type="InterPro" id="IPR003699">
    <property type="entry name" value="QueA"/>
</dbReference>
<dbReference type="InterPro" id="IPR042118">
    <property type="entry name" value="QueA_dom1"/>
</dbReference>
<dbReference type="InterPro" id="IPR042119">
    <property type="entry name" value="QueA_dom2"/>
</dbReference>
<dbReference type="InterPro" id="IPR036100">
    <property type="entry name" value="QueA_sf"/>
</dbReference>
<dbReference type="NCBIfam" id="NF001140">
    <property type="entry name" value="PRK00147.1"/>
    <property type="match status" value="1"/>
</dbReference>
<dbReference type="NCBIfam" id="TIGR00113">
    <property type="entry name" value="queA"/>
    <property type="match status" value="1"/>
</dbReference>
<dbReference type="PANTHER" id="PTHR30307">
    <property type="entry name" value="S-ADENOSYLMETHIONINE:TRNA RIBOSYLTRANSFERASE-ISOMERASE"/>
    <property type="match status" value="1"/>
</dbReference>
<dbReference type="PANTHER" id="PTHR30307:SF0">
    <property type="entry name" value="S-ADENOSYLMETHIONINE:TRNA RIBOSYLTRANSFERASE-ISOMERASE"/>
    <property type="match status" value="1"/>
</dbReference>
<dbReference type="Pfam" id="PF02547">
    <property type="entry name" value="Queuosine_synth"/>
    <property type="match status" value="1"/>
</dbReference>
<dbReference type="SUPFAM" id="SSF111337">
    <property type="entry name" value="QueA-like"/>
    <property type="match status" value="1"/>
</dbReference>
<evidence type="ECO:0000255" key="1">
    <source>
        <dbReference type="HAMAP-Rule" id="MF_00113"/>
    </source>
</evidence>
<accession>Q1BZ02</accession>
<organism>
    <name type="scientific">Burkholderia orbicola (strain AU 1054)</name>
    <dbReference type="NCBI Taxonomy" id="331271"/>
    <lineage>
        <taxon>Bacteria</taxon>
        <taxon>Pseudomonadati</taxon>
        <taxon>Pseudomonadota</taxon>
        <taxon>Betaproteobacteria</taxon>
        <taxon>Burkholderiales</taxon>
        <taxon>Burkholderiaceae</taxon>
        <taxon>Burkholderia</taxon>
        <taxon>Burkholderia cepacia complex</taxon>
        <taxon>Burkholderia orbicola</taxon>
    </lineage>
</organism>
<comment type="function">
    <text evidence="1">Transfers and isomerizes the ribose moiety from AdoMet to the 7-aminomethyl group of 7-deazaguanine (preQ1-tRNA) to give epoxyqueuosine (oQ-tRNA).</text>
</comment>
<comment type="catalytic activity">
    <reaction evidence="1">
        <text>7-aminomethyl-7-carbaguanosine(34) in tRNA + S-adenosyl-L-methionine = epoxyqueuosine(34) in tRNA + adenine + L-methionine + 2 H(+)</text>
        <dbReference type="Rhea" id="RHEA:32155"/>
        <dbReference type="Rhea" id="RHEA-COMP:10342"/>
        <dbReference type="Rhea" id="RHEA-COMP:18582"/>
        <dbReference type="ChEBI" id="CHEBI:15378"/>
        <dbReference type="ChEBI" id="CHEBI:16708"/>
        <dbReference type="ChEBI" id="CHEBI:57844"/>
        <dbReference type="ChEBI" id="CHEBI:59789"/>
        <dbReference type="ChEBI" id="CHEBI:82833"/>
        <dbReference type="ChEBI" id="CHEBI:194443"/>
        <dbReference type="EC" id="2.4.99.17"/>
    </reaction>
</comment>
<comment type="pathway">
    <text evidence="1">tRNA modification; tRNA-queuosine biosynthesis.</text>
</comment>
<comment type="subunit">
    <text evidence="1">Monomer.</text>
</comment>
<comment type="subcellular location">
    <subcellularLocation>
        <location evidence="1">Cytoplasm</location>
    </subcellularLocation>
</comment>
<comment type="similarity">
    <text evidence="1">Belongs to the QueA family.</text>
</comment>
<keyword id="KW-0963">Cytoplasm</keyword>
<keyword id="KW-0671">Queuosine biosynthesis</keyword>
<keyword id="KW-0949">S-adenosyl-L-methionine</keyword>
<keyword id="KW-0808">Transferase</keyword>
<reference key="1">
    <citation type="submission" date="2006-05" db="EMBL/GenBank/DDBJ databases">
        <title>Complete sequence of chromosome 1 of Burkholderia cenocepacia AU 1054.</title>
        <authorList>
            <consortium name="US DOE Joint Genome Institute"/>
            <person name="Copeland A."/>
            <person name="Lucas S."/>
            <person name="Lapidus A."/>
            <person name="Barry K."/>
            <person name="Detter J.C."/>
            <person name="Glavina del Rio T."/>
            <person name="Hammon N."/>
            <person name="Israni S."/>
            <person name="Dalin E."/>
            <person name="Tice H."/>
            <person name="Pitluck S."/>
            <person name="Chain P."/>
            <person name="Malfatti S."/>
            <person name="Shin M."/>
            <person name="Vergez L."/>
            <person name="Schmutz J."/>
            <person name="Larimer F."/>
            <person name="Land M."/>
            <person name="Hauser L."/>
            <person name="Kyrpides N."/>
            <person name="Lykidis A."/>
            <person name="LiPuma J.J."/>
            <person name="Konstantinidis K."/>
            <person name="Tiedje J.M."/>
            <person name="Richardson P."/>
        </authorList>
    </citation>
    <scope>NUCLEOTIDE SEQUENCE [LARGE SCALE GENOMIC DNA]</scope>
    <source>
        <strain>AU 1054</strain>
    </source>
</reference>
<gene>
    <name evidence="1" type="primary">queA</name>
    <name type="ordered locus">Bcen_0239</name>
</gene>
<proteinExistence type="inferred from homology"/>
<sequence>MFTLSDFDFNLPPELIAQTALPDRTASRLLEVDGSVAPARLVDRHFAELPSCIAPGDLLVFNDTKVLKARFFGQKASGGKIEVLIERVTGTHTALAQIRASKSPGAGTTLRLADAFDVTVGERVEPFFTLHFPAPCLDLIEQHGRLPLPPYIEHDADATDETRYQTVYASNPGAVAAPTAGLHFDQPLLDKLDAMGVERATLTLHVGAGTFQPVRVENIAEHKMHSEWYDLPQSLVDKIAATRARGGNVIAVGTTSMRALEAAARSADEAGRPLAATQAETDIFITPGYRFRVVDRLVTNFHLPKSTLLMLVSAFAGVETIRAAYRHAIEERYRFFSYGDAMLLTRRDTPEAPGA</sequence>
<name>QUEA_BURO1</name>
<protein>
    <recommendedName>
        <fullName evidence="1">S-adenosylmethionine:tRNA ribosyltransferase-isomerase</fullName>
        <ecNumber evidence="1">2.4.99.17</ecNumber>
    </recommendedName>
    <alternativeName>
        <fullName evidence="1">Queuosine biosynthesis protein QueA</fullName>
    </alternativeName>
</protein>